<feature type="chain" id="PRO_1000202176" description="UDP-N-acetylmuramate--L-alanine ligase">
    <location>
        <begin position="1"/>
        <end position="457"/>
    </location>
</feature>
<feature type="binding site" evidence="1">
    <location>
        <begin position="112"/>
        <end position="118"/>
    </location>
    <ligand>
        <name>ATP</name>
        <dbReference type="ChEBI" id="CHEBI:30616"/>
    </ligand>
</feature>
<evidence type="ECO:0000255" key="1">
    <source>
        <dbReference type="HAMAP-Rule" id="MF_00046"/>
    </source>
</evidence>
<accession>C4XK68</accession>
<keyword id="KW-0067">ATP-binding</keyword>
<keyword id="KW-0131">Cell cycle</keyword>
<keyword id="KW-0132">Cell division</keyword>
<keyword id="KW-0133">Cell shape</keyword>
<keyword id="KW-0961">Cell wall biogenesis/degradation</keyword>
<keyword id="KW-0963">Cytoplasm</keyword>
<keyword id="KW-0436">Ligase</keyword>
<keyword id="KW-0547">Nucleotide-binding</keyword>
<keyword id="KW-0573">Peptidoglycan synthesis</keyword>
<name>MURC_SOLM1</name>
<organism>
    <name type="scientific">Solidesulfovibrio magneticus (strain ATCC 700980 / DSM 13731 / RS-1)</name>
    <name type="common">Desulfovibrio magneticus</name>
    <dbReference type="NCBI Taxonomy" id="573370"/>
    <lineage>
        <taxon>Bacteria</taxon>
        <taxon>Pseudomonadati</taxon>
        <taxon>Thermodesulfobacteriota</taxon>
        <taxon>Desulfovibrionia</taxon>
        <taxon>Desulfovibrionales</taxon>
        <taxon>Desulfovibrionaceae</taxon>
        <taxon>Solidesulfovibrio</taxon>
    </lineage>
</organism>
<protein>
    <recommendedName>
        <fullName evidence="1">UDP-N-acetylmuramate--L-alanine ligase</fullName>
        <ecNumber evidence="1">6.3.2.8</ecNumber>
    </recommendedName>
    <alternativeName>
        <fullName evidence="1">UDP-N-acetylmuramoyl-L-alanine synthetase</fullName>
    </alternativeName>
</protein>
<sequence>MRNKVRKIHMIGIGGSGMSGIAEVLLNLGYEVSGSDLSMSQTVRRLGSLGASIAIGHGRENLGDADVVVKSTAVTSDNPEVVVARERGIPVIPRAEMLAELMRLRTGIAVAGTHGKTTTTSLLATIFTEAGYDPTVIIGGRLNAYGAGARLGQGEYLIAEADESDGSFLCLSPIASVVTNVDADHLDHYDGIEAIDDAFVDFLNNIPFYGVNVVCLDDPGVARILPRVNRPILTYGFSDKARLRGRIIDSGAMSCFEVSLDGKRLGEMRLNHPGRHNVLNALGAIGVSLEVGIPLGTIAEALAKFAGVGRRFERKGEKDGVVVVDDYGHHPAEIKATLATARAVYPERRLVVAFQPHRFSRTKALFGDFCTCFEAADELLLTEIYPASEAPIPGVSGESLGQGIRQVTKTKVAYYPDFAAMEAALPGILRPGDLFVTLGAGSIWQVGAHYLESERGA</sequence>
<comment type="function">
    <text evidence="1">Cell wall formation.</text>
</comment>
<comment type="catalytic activity">
    <reaction evidence="1">
        <text>UDP-N-acetyl-alpha-D-muramate + L-alanine + ATP = UDP-N-acetyl-alpha-D-muramoyl-L-alanine + ADP + phosphate + H(+)</text>
        <dbReference type="Rhea" id="RHEA:23372"/>
        <dbReference type="ChEBI" id="CHEBI:15378"/>
        <dbReference type="ChEBI" id="CHEBI:30616"/>
        <dbReference type="ChEBI" id="CHEBI:43474"/>
        <dbReference type="ChEBI" id="CHEBI:57972"/>
        <dbReference type="ChEBI" id="CHEBI:70757"/>
        <dbReference type="ChEBI" id="CHEBI:83898"/>
        <dbReference type="ChEBI" id="CHEBI:456216"/>
        <dbReference type="EC" id="6.3.2.8"/>
    </reaction>
</comment>
<comment type="pathway">
    <text evidence="1">Cell wall biogenesis; peptidoglycan biosynthesis.</text>
</comment>
<comment type="subcellular location">
    <subcellularLocation>
        <location evidence="1">Cytoplasm</location>
    </subcellularLocation>
</comment>
<comment type="similarity">
    <text evidence="1">Belongs to the MurCDEF family.</text>
</comment>
<proteinExistence type="inferred from homology"/>
<dbReference type="EC" id="6.3.2.8" evidence="1"/>
<dbReference type="EMBL" id="AP010904">
    <property type="protein sequence ID" value="BAH76817.1"/>
    <property type="molecule type" value="Genomic_DNA"/>
</dbReference>
<dbReference type="RefSeq" id="WP_015861967.1">
    <property type="nucleotide sequence ID" value="NC_012796.1"/>
</dbReference>
<dbReference type="SMR" id="C4XK68"/>
<dbReference type="STRING" id="573370.DMR_33260"/>
<dbReference type="KEGG" id="dma:DMR_33260"/>
<dbReference type="eggNOG" id="COG0773">
    <property type="taxonomic scope" value="Bacteria"/>
</dbReference>
<dbReference type="HOGENOM" id="CLU_028104_2_2_7"/>
<dbReference type="OrthoDB" id="9804126at2"/>
<dbReference type="UniPathway" id="UPA00219"/>
<dbReference type="Proteomes" id="UP000009071">
    <property type="component" value="Chromosome"/>
</dbReference>
<dbReference type="GO" id="GO:0005737">
    <property type="term" value="C:cytoplasm"/>
    <property type="evidence" value="ECO:0007669"/>
    <property type="project" value="UniProtKB-SubCell"/>
</dbReference>
<dbReference type="GO" id="GO:0005524">
    <property type="term" value="F:ATP binding"/>
    <property type="evidence" value="ECO:0007669"/>
    <property type="project" value="UniProtKB-UniRule"/>
</dbReference>
<dbReference type="GO" id="GO:0008763">
    <property type="term" value="F:UDP-N-acetylmuramate-L-alanine ligase activity"/>
    <property type="evidence" value="ECO:0007669"/>
    <property type="project" value="UniProtKB-UniRule"/>
</dbReference>
<dbReference type="GO" id="GO:0051301">
    <property type="term" value="P:cell division"/>
    <property type="evidence" value="ECO:0007669"/>
    <property type="project" value="UniProtKB-KW"/>
</dbReference>
<dbReference type="GO" id="GO:0071555">
    <property type="term" value="P:cell wall organization"/>
    <property type="evidence" value="ECO:0007669"/>
    <property type="project" value="UniProtKB-KW"/>
</dbReference>
<dbReference type="GO" id="GO:0009252">
    <property type="term" value="P:peptidoglycan biosynthetic process"/>
    <property type="evidence" value="ECO:0007669"/>
    <property type="project" value="UniProtKB-UniRule"/>
</dbReference>
<dbReference type="GO" id="GO:0008360">
    <property type="term" value="P:regulation of cell shape"/>
    <property type="evidence" value="ECO:0007669"/>
    <property type="project" value="UniProtKB-KW"/>
</dbReference>
<dbReference type="Gene3D" id="3.90.190.20">
    <property type="entry name" value="Mur ligase, C-terminal domain"/>
    <property type="match status" value="1"/>
</dbReference>
<dbReference type="Gene3D" id="3.40.1190.10">
    <property type="entry name" value="Mur-like, catalytic domain"/>
    <property type="match status" value="1"/>
</dbReference>
<dbReference type="Gene3D" id="3.40.50.720">
    <property type="entry name" value="NAD(P)-binding Rossmann-like Domain"/>
    <property type="match status" value="1"/>
</dbReference>
<dbReference type="HAMAP" id="MF_00046">
    <property type="entry name" value="MurC"/>
    <property type="match status" value="1"/>
</dbReference>
<dbReference type="InterPro" id="IPR036565">
    <property type="entry name" value="Mur-like_cat_sf"/>
</dbReference>
<dbReference type="InterPro" id="IPR004101">
    <property type="entry name" value="Mur_ligase_C"/>
</dbReference>
<dbReference type="InterPro" id="IPR036615">
    <property type="entry name" value="Mur_ligase_C_dom_sf"/>
</dbReference>
<dbReference type="InterPro" id="IPR013221">
    <property type="entry name" value="Mur_ligase_cen"/>
</dbReference>
<dbReference type="InterPro" id="IPR000713">
    <property type="entry name" value="Mur_ligase_N"/>
</dbReference>
<dbReference type="InterPro" id="IPR050061">
    <property type="entry name" value="MurCDEF_pg_biosynth"/>
</dbReference>
<dbReference type="InterPro" id="IPR005758">
    <property type="entry name" value="UDP-N-AcMur_Ala_ligase_MurC"/>
</dbReference>
<dbReference type="NCBIfam" id="TIGR01082">
    <property type="entry name" value="murC"/>
    <property type="match status" value="1"/>
</dbReference>
<dbReference type="PANTHER" id="PTHR43445:SF3">
    <property type="entry name" value="UDP-N-ACETYLMURAMATE--L-ALANINE LIGASE"/>
    <property type="match status" value="1"/>
</dbReference>
<dbReference type="PANTHER" id="PTHR43445">
    <property type="entry name" value="UDP-N-ACETYLMURAMATE--L-ALANINE LIGASE-RELATED"/>
    <property type="match status" value="1"/>
</dbReference>
<dbReference type="Pfam" id="PF01225">
    <property type="entry name" value="Mur_ligase"/>
    <property type="match status" value="1"/>
</dbReference>
<dbReference type="Pfam" id="PF02875">
    <property type="entry name" value="Mur_ligase_C"/>
    <property type="match status" value="1"/>
</dbReference>
<dbReference type="Pfam" id="PF08245">
    <property type="entry name" value="Mur_ligase_M"/>
    <property type="match status" value="1"/>
</dbReference>
<dbReference type="SUPFAM" id="SSF51984">
    <property type="entry name" value="MurCD N-terminal domain"/>
    <property type="match status" value="1"/>
</dbReference>
<dbReference type="SUPFAM" id="SSF53623">
    <property type="entry name" value="MurD-like peptide ligases, catalytic domain"/>
    <property type="match status" value="1"/>
</dbReference>
<dbReference type="SUPFAM" id="SSF53244">
    <property type="entry name" value="MurD-like peptide ligases, peptide-binding domain"/>
    <property type="match status" value="1"/>
</dbReference>
<reference key="1">
    <citation type="journal article" date="2009" name="Genome Res.">
        <title>Whole genome sequence of Desulfovibrio magneticus strain RS-1 revealed common gene clusters in magnetotactic bacteria.</title>
        <authorList>
            <person name="Nakazawa H."/>
            <person name="Arakaki A."/>
            <person name="Narita-Yamada S."/>
            <person name="Yashiro I."/>
            <person name="Jinno K."/>
            <person name="Aoki N."/>
            <person name="Tsuruyama A."/>
            <person name="Okamura Y."/>
            <person name="Tanikawa S."/>
            <person name="Fujita N."/>
            <person name="Takeyama H."/>
            <person name="Matsunaga T."/>
        </authorList>
    </citation>
    <scope>NUCLEOTIDE SEQUENCE [LARGE SCALE GENOMIC DNA]</scope>
    <source>
        <strain>ATCC 700980 / DSM 13731 / RS-1</strain>
    </source>
</reference>
<gene>
    <name evidence="1" type="primary">murC</name>
    <name type="ordered locus">DMR_33260</name>
</gene>